<name>TRMD_PORGI</name>
<organism>
    <name type="scientific">Porphyromonas gingivalis (strain ATCC BAA-308 / W83)</name>
    <dbReference type="NCBI Taxonomy" id="242619"/>
    <lineage>
        <taxon>Bacteria</taxon>
        <taxon>Pseudomonadati</taxon>
        <taxon>Bacteroidota</taxon>
        <taxon>Bacteroidia</taxon>
        <taxon>Bacteroidales</taxon>
        <taxon>Porphyromonadaceae</taxon>
        <taxon>Porphyromonas</taxon>
    </lineage>
</organism>
<reference key="1">
    <citation type="journal article" date="2003" name="J. Bacteriol.">
        <title>Complete genome sequence of the oral pathogenic bacterium Porphyromonas gingivalis strain W83.</title>
        <authorList>
            <person name="Nelson K.E."/>
            <person name="Fleischmann R.D."/>
            <person name="DeBoy R.T."/>
            <person name="Paulsen I.T."/>
            <person name="Fouts D.E."/>
            <person name="Eisen J.A."/>
            <person name="Daugherty S.C."/>
            <person name="Dodson R.J."/>
            <person name="Durkin A.S."/>
            <person name="Gwinn M.L."/>
            <person name="Haft D.H."/>
            <person name="Kolonay J.F."/>
            <person name="Nelson W.C."/>
            <person name="Mason T.M."/>
            <person name="Tallon L."/>
            <person name="Gray J."/>
            <person name="Granger D."/>
            <person name="Tettelin H."/>
            <person name="Dong H."/>
            <person name="Galvin J.L."/>
            <person name="Duncan M.J."/>
            <person name="Dewhirst F.E."/>
            <person name="Fraser C.M."/>
        </authorList>
    </citation>
    <scope>NUCLEOTIDE SEQUENCE [LARGE SCALE GENOMIC DNA]</scope>
    <source>
        <strain>ATCC BAA-308 / W83</strain>
    </source>
</reference>
<proteinExistence type="inferred from homology"/>
<evidence type="ECO:0000255" key="1">
    <source>
        <dbReference type="HAMAP-Rule" id="MF_00605"/>
    </source>
</evidence>
<keyword id="KW-0963">Cytoplasm</keyword>
<keyword id="KW-0489">Methyltransferase</keyword>
<keyword id="KW-1185">Reference proteome</keyword>
<keyword id="KW-0949">S-adenosyl-L-methionine</keyword>
<keyword id="KW-0808">Transferase</keyword>
<keyword id="KW-0819">tRNA processing</keyword>
<feature type="chain" id="PRO_0000060431" description="tRNA (guanine-N(1)-)-methyltransferase">
    <location>
        <begin position="1"/>
        <end position="225"/>
    </location>
</feature>
<feature type="binding site" evidence="1">
    <location>
        <position position="112"/>
    </location>
    <ligand>
        <name>S-adenosyl-L-methionine</name>
        <dbReference type="ChEBI" id="CHEBI:59789"/>
    </ligand>
</feature>
<feature type="binding site" evidence="1">
    <location>
        <begin position="132"/>
        <end position="137"/>
    </location>
    <ligand>
        <name>S-adenosyl-L-methionine</name>
        <dbReference type="ChEBI" id="CHEBI:59789"/>
    </ligand>
</feature>
<accession>Q7MAV4</accession>
<sequence length="225" mass="25604">MRIDIITVLPEMIENTLNCSIIGRAQERGLLELKLHQLRDYSTDKWKRVDDYPFGGEPGMVMQIEPIDRIITELKTQREYDEVIFTSPDGERFDQPMANELSLLSNLIVLCGHYKGIDYRIREHLITREISIGDYVLTGGELAAAVMTDAIARLIPGVLNDAGSALSDTFQDNLLAPPVYTRPAEYKGWRVPDILLSGHEANIAKWRLEQAVERTKRLRPDLIKD</sequence>
<comment type="function">
    <text evidence="1">Specifically methylates guanosine-37 in various tRNAs.</text>
</comment>
<comment type="catalytic activity">
    <reaction evidence="1">
        <text>guanosine(37) in tRNA + S-adenosyl-L-methionine = N(1)-methylguanosine(37) in tRNA + S-adenosyl-L-homocysteine + H(+)</text>
        <dbReference type="Rhea" id="RHEA:36899"/>
        <dbReference type="Rhea" id="RHEA-COMP:10145"/>
        <dbReference type="Rhea" id="RHEA-COMP:10147"/>
        <dbReference type="ChEBI" id="CHEBI:15378"/>
        <dbReference type="ChEBI" id="CHEBI:57856"/>
        <dbReference type="ChEBI" id="CHEBI:59789"/>
        <dbReference type="ChEBI" id="CHEBI:73542"/>
        <dbReference type="ChEBI" id="CHEBI:74269"/>
        <dbReference type="EC" id="2.1.1.228"/>
    </reaction>
</comment>
<comment type="subunit">
    <text evidence="1">Homodimer.</text>
</comment>
<comment type="subcellular location">
    <subcellularLocation>
        <location evidence="1">Cytoplasm</location>
    </subcellularLocation>
</comment>
<comment type="similarity">
    <text evidence="1">Belongs to the RNA methyltransferase TrmD family.</text>
</comment>
<dbReference type="EC" id="2.1.1.228" evidence="1"/>
<dbReference type="EMBL" id="AE015924">
    <property type="protein sequence ID" value="AAQ67001.1"/>
    <property type="molecule type" value="Genomic_DNA"/>
</dbReference>
<dbReference type="RefSeq" id="WP_005874415.1">
    <property type="nucleotide sequence ID" value="NC_002950.2"/>
</dbReference>
<dbReference type="SMR" id="Q7MAV4"/>
<dbReference type="STRING" id="242619.PG_2035"/>
<dbReference type="EnsemblBacteria" id="AAQ67001">
    <property type="protein sequence ID" value="AAQ67001"/>
    <property type="gene ID" value="PG_2035"/>
</dbReference>
<dbReference type="KEGG" id="pgi:PG_2035"/>
<dbReference type="eggNOG" id="COG0336">
    <property type="taxonomic scope" value="Bacteria"/>
</dbReference>
<dbReference type="HOGENOM" id="CLU_047363_0_1_10"/>
<dbReference type="Proteomes" id="UP000000588">
    <property type="component" value="Chromosome"/>
</dbReference>
<dbReference type="GO" id="GO:0005829">
    <property type="term" value="C:cytosol"/>
    <property type="evidence" value="ECO:0007669"/>
    <property type="project" value="TreeGrafter"/>
</dbReference>
<dbReference type="GO" id="GO:0052906">
    <property type="term" value="F:tRNA (guanine(37)-N1)-methyltransferase activity"/>
    <property type="evidence" value="ECO:0007669"/>
    <property type="project" value="UniProtKB-UniRule"/>
</dbReference>
<dbReference type="GO" id="GO:0002939">
    <property type="term" value="P:tRNA N1-guanine methylation"/>
    <property type="evidence" value="ECO:0007669"/>
    <property type="project" value="TreeGrafter"/>
</dbReference>
<dbReference type="CDD" id="cd18080">
    <property type="entry name" value="TrmD-like"/>
    <property type="match status" value="1"/>
</dbReference>
<dbReference type="FunFam" id="3.40.1280.10:FF:000001">
    <property type="entry name" value="tRNA (guanine-N(1)-)-methyltransferase"/>
    <property type="match status" value="1"/>
</dbReference>
<dbReference type="Gene3D" id="3.40.1280.10">
    <property type="match status" value="1"/>
</dbReference>
<dbReference type="Gene3D" id="1.10.1270.20">
    <property type="entry name" value="tRNA(m1g37)methyltransferase, domain 2"/>
    <property type="match status" value="1"/>
</dbReference>
<dbReference type="HAMAP" id="MF_00605">
    <property type="entry name" value="TrmD"/>
    <property type="match status" value="1"/>
</dbReference>
<dbReference type="InterPro" id="IPR029028">
    <property type="entry name" value="Alpha/beta_knot_MTases"/>
</dbReference>
<dbReference type="InterPro" id="IPR023148">
    <property type="entry name" value="tRNA_m1G_MeTrfase_C_sf"/>
</dbReference>
<dbReference type="InterPro" id="IPR002649">
    <property type="entry name" value="tRNA_m1G_MeTrfase_TrmD"/>
</dbReference>
<dbReference type="InterPro" id="IPR029026">
    <property type="entry name" value="tRNA_m1G_MTases_N"/>
</dbReference>
<dbReference type="InterPro" id="IPR016009">
    <property type="entry name" value="tRNA_MeTrfase_TRMD/TRM10"/>
</dbReference>
<dbReference type="NCBIfam" id="NF000648">
    <property type="entry name" value="PRK00026.1"/>
    <property type="match status" value="1"/>
</dbReference>
<dbReference type="NCBIfam" id="TIGR00088">
    <property type="entry name" value="trmD"/>
    <property type="match status" value="1"/>
</dbReference>
<dbReference type="PANTHER" id="PTHR46417">
    <property type="entry name" value="TRNA (GUANINE-N(1)-)-METHYLTRANSFERASE"/>
    <property type="match status" value="1"/>
</dbReference>
<dbReference type="PANTHER" id="PTHR46417:SF1">
    <property type="entry name" value="TRNA (GUANINE-N(1)-)-METHYLTRANSFERASE"/>
    <property type="match status" value="1"/>
</dbReference>
<dbReference type="Pfam" id="PF01746">
    <property type="entry name" value="tRNA_m1G_MT"/>
    <property type="match status" value="1"/>
</dbReference>
<dbReference type="PIRSF" id="PIRSF000386">
    <property type="entry name" value="tRNA_mtase"/>
    <property type="match status" value="1"/>
</dbReference>
<dbReference type="SUPFAM" id="SSF75217">
    <property type="entry name" value="alpha/beta knot"/>
    <property type="match status" value="1"/>
</dbReference>
<gene>
    <name evidence="1" type="primary">trmD</name>
    <name type="ordered locus">PG_2035</name>
</gene>
<protein>
    <recommendedName>
        <fullName evidence="1">tRNA (guanine-N(1)-)-methyltransferase</fullName>
        <ecNumber evidence="1">2.1.1.228</ecNumber>
    </recommendedName>
    <alternativeName>
        <fullName evidence="1">M1G-methyltransferase</fullName>
    </alternativeName>
    <alternativeName>
        <fullName evidence="1">tRNA [GM37] methyltransferase</fullName>
    </alternativeName>
</protein>